<evidence type="ECO:0000255" key="1">
    <source>
        <dbReference type="HAMAP-Rule" id="MF_01864"/>
    </source>
</evidence>
<evidence type="ECO:0000255" key="2">
    <source>
        <dbReference type="PROSITE-ProRule" id="PRU01266"/>
    </source>
</evidence>
<accession>A3PED9</accession>
<sequence length="464" mass="52724">MLTKTKSDEIKTQKDSTTGSYWITTFGCQMNKADSERMAGTLEKMGYTRADNELNADLVLYNTCTIRDNAEQKVYSFLGRQAKRKHKTPRLKLVVAGCLAQQEGESLLRRVPELDLVMGPQHVNNLENLLGKVDLGNQVVATEETFISEDITSARRESSICGWVNIIYGCNERCSYCVVPSVRGKEQSRYPNAIKSEIQKLADDNFKEITLLGQNIDAYGRDLPGTTKEGRKENTLTDLLYYIHDVKGIRRIRFATSHPRYFSKRLIQACYELDKVCEHFHIPFQSGNDEILKQMSRGYSIKKYKNIIENIRSLMPDASITADAIVAFPGETEKQYQDTLKLISEIGFDQVNTAAYSARPNTPAAVWTNQLSEEVKKARLQEINDLVEKTARSRNQRYIDNIESVLIEGLNPKNSSQIMGRTRTNRLTFVEIPKNINFNFSLGDEINVRINEARPFSLTGELSL</sequence>
<dbReference type="EC" id="2.8.4.3" evidence="1"/>
<dbReference type="EMBL" id="CP000576">
    <property type="protein sequence ID" value="ABO18114.1"/>
    <property type="molecule type" value="Genomic_DNA"/>
</dbReference>
<dbReference type="RefSeq" id="WP_011863421.1">
    <property type="nucleotide sequence ID" value="NC_009091.1"/>
</dbReference>
<dbReference type="SMR" id="A3PED9"/>
<dbReference type="STRING" id="167546.P9301_14911"/>
<dbReference type="KEGG" id="pmg:P9301_14911"/>
<dbReference type="eggNOG" id="COG0621">
    <property type="taxonomic scope" value="Bacteria"/>
</dbReference>
<dbReference type="HOGENOM" id="CLU_018697_2_2_3"/>
<dbReference type="OrthoDB" id="9805215at2"/>
<dbReference type="Proteomes" id="UP000001430">
    <property type="component" value="Chromosome"/>
</dbReference>
<dbReference type="GO" id="GO:0005737">
    <property type="term" value="C:cytoplasm"/>
    <property type="evidence" value="ECO:0007669"/>
    <property type="project" value="UniProtKB-SubCell"/>
</dbReference>
<dbReference type="GO" id="GO:0051539">
    <property type="term" value="F:4 iron, 4 sulfur cluster binding"/>
    <property type="evidence" value="ECO:0007669"/>
    <property type="project" value="UniProtKB-UniRule"/>
</dbReference>
<dbReference type="GO" id="GO:0046872">
    <property type="term" value="F:metal ion binding"/>
    <property type="evidence" value="ECO:0007669"/>
    <property type="project" value="UniProtKB-KW"/>
</dbReference>
<dbReference type="GO" id="GO:0035596">
    <property type="term" value="F:methylthiotransferase activity"/>
    <property type="evidence" value="ECO:0007669"/>
    <property type="project" value="InterPro"/>
</dbReference>
<dbReference type="GO" id="GO:0035600">
    <property type="term" value="P:tRNA methylthiolation"/>
    <property type="evidence" value="ECO:0007669"/>
    <property type="project" value="TreeGrafter"/>
</dbReference>
<dbReference type="CDD" id="cd01335">
    <property type="entry name" value="Radical_SAM"/>
    <property type="match status" value="1"/>
</dbReference>
<dbReference type="FunFam" id="3.40.50.12160:FF:000006">
    <property type="entry name" value="tRNA-2-methylthio-N(6)-dimethylallyladenosine synthase"/>
    <property type="match status" value="1"/>
</dbReference>
<dbReference type="FunFam" id="3.80.30.20:FF:000001">
    <property type="entry name" value="tRNA-2-methylthio-N(6)-dimethylallyladenosine synthase 2"/>
    <property type="match status" value="1"/>
</dbReference>
<dbReference type="Gene3D" id="3.40.50.12160">
    <property type="entry name" value="Methylthiotransferase, N-terminal domain"/>
    <property type="match status" value="1"/>
</dbReference>
<dbReference type="Gene3D" id="3.80.30.20">
    <property type="entry name" value="tm_1862 like domain"/>
    <property type="match status" value="1"/>
</dbReference>
<dbReference type="HAMAP" id="MF_01864">
    <property type="entry name" value="tRNA_metthiotr_MiaB"/>
    <property type="match status" value="1"/>
</dbReference>
<dbReference type="InterPro" id="IPR006638">
    <property type="entry name" value="Elp3/MiaA/NifB-like_rSAM"/>
</dbReference>
<dbReference type="InterPro" id="IPR005839">
    <property type="entry name" value="Methylthiotransferase"/>
</dbReference>
<dbReference type="InterPro" id="IPR020612">
    <property type="entry name" value="Methylthiotransferase_CS"/>
</dbReference>
<dbReference type="InterPro" id="IPR013848">
    <property type="entry name" value="Methylthiotransferase_N"/>
</dbReference>
<dbReference type="InterPro" id="IPR038135">
    <property type="entry name" value="Methylthiotransferase_N_sf"/>
</dbReference>
<dbReference type="InterPro" id="IPR006463">
    <property type="entry name" value="MiaB_methiolase"/>
</dbReference>
<dbReference type="InterPro" id="IPR007197">
    <property type="entry name" value="rSAM"/>
</dbReference>
<dbReference type="InterPro" id="IPR023404">
    <property type="entry name" value="rSAM_horseshoe"/>
</dbReference>
<dbReference type="InterPro" id="IPR002792">
    <property type="entry name" value="TRAM_dom"/>
</dbReference>
<dbReference type="NCBIfam" id="TIGR01574">
    <property type="entry name" value="miaB-methiolase"/>
    <property type="match status" value="1"/>
</dbReference>
<dbReference type="NCBIfam" id="TIGR00089">
    <property type="entry name" value="MiaB/RimO family radical SAM methylthiotransferase"/>
    <property type="match status" value="1"/>
</dbReference>
<dbReference type="PANTHER" id="PTHR43020">
    <property type="entry name" value="CDK5 REGULATORY SUBUNIT-ASSOCIATED PROTEIN 1"/>
    <property type="match status" value="1"/>
</dbReference>
<dbReference type="PANTHER" id="PTHR43020:SF2">
    <property type="entry name" value="MITOCHONDRIAL TRNA METHYLTHIOTRANSFERASE CDK5RAP1"/>
    <property type="match status" value="1"/>
</dbReference>
<dbReference type="Pfam" id="PF04055">
    <property type="entry name" value="Radical_SAM"/>
    <property type="match status" value="1"/>
</dbReference>
<dbReference type="Pfam" id="PF01938">
    <property type="entry name" value="TRAM"/>
    <property type="match status" value="1"/>
</dbReference>
<dbReference type="Pfam" id="PF00919">
    <property type="entry name" value="UPF0004"/>
    <property type="match status" value="1"/>
</dbReference>
<dbReference type="SFLD" id="SFLDF00273">
    <property type="entry name" value="(dimethylallyl)adenosine_tRNA"/>
    <property type="match status" value="1"/>
</dbReference>
<dbReference type="SFLD" id="SFLDG01082">
    <property type="entry name" value="B12-binding_domain_containing"/>
    <property type="match status" value="1"/>
</dbReference>
<dbReference type="SFLD" id="SFLDG01061">
    <property type="entry name" value="methylthiotransferase"/>
    <property type="match status" value="1"/>
</dbReference>
<dbReference type="SMART" id="SM00729">
    <property type="entry name" value="Elp3"/>
    <property type="match status" value="1"/>
</dbReference>
<dbReference type="SUPFAM" id="SSF102114">
    <property type="entry name" value="Radical SAM enzymes"/>
    <property type="match status" value="1"/>
</dbReference>
<dbReference type="PROSITE" id="PS51449">
    <property type="entry name" value="MTTASE_N"/>
    <property type="match status" value="1"/>
</dbReference>
<dbReference type="PROSITE" id="PS01278">
    <property type="entry name" value="MTTASE_RADICAL"/>
    <property type="match status" value="1"/>
</dbReference>
<dbReference type="PROSITE" id="PS51918">
    <property type="entry name" value="RADICAL_SAM"/>
    <property type="match status" value="1"/>
</dbReference>
<dbReference type="PROSITE" id="PS50926">
    <property type="entry name" value="TRAM"/>
    <property type="match status" value="1"/>
</dbReference>
<feature type="chain" id="PRO_0000374447" description="tRNA-2-methylthio-N(6)-dimethylallyladenosine synthase">
    <location>
        <begin position="1"/>
        <end position="464"/>
    </location>
</feature>
<feature type="domain" description="MTTase N-terminal" evidence="1">
    <location>
        <begin position="19"/>
        <end position="135"/>
    </location>
</feature>
<feature type="domain" description="Radical SAM core" evidence="2">
    <location>
        <begin position="156"/>
        <end position="394"/>
    </location>
</feature>
<feature type="domain" description="TRAM" evidence="1">
    <location>
        <begin position="396"/>
        <end position="464"/>
    </location>
</feature>
<feature type="binding site" evidence="1">
    <location>
        <position position="28"/>
    </location>
    <ligand>
        <name>[4Fe-4S] cluster</name>
        <dbReference type="ChEBI" id="CHEBI:49883"/>
        <label>1</label>
    </ligand>
</feature>
<feature type="binding site" evidence="1">
    <location>
        <position position="64"/>
    </location>
    <ligand>
        <name>[4Fe-4S] cluster</name>
        <dbReference type="ChEBI" id="CHEBI:49883"/>
        <label>1</label>
    </ligand>
</feature>
<feature type="binding site" evidence="1">
    <location>
        <position position="98"/>
    </location>
    <ligand>
        <name>[4Fe-4S] cluster</name>
        <dbReference type="ChEBI" id="CHEBI:49883"/>
        <label>1</label>
    </ligand>
</feature>
<feature type="binding site" evidence="1">
    <location>
        <position position="170"/>
    </location>
    <ligand>
        <name>[4Fe-4S] cluster</name>
        <dbReference type="ChEBI" id="CHEBI:49883"/>
        <label>2</label>
        <note>4Fe-4S-S-AdoMet</note>
    </ligand>
</feature>
<feature type="binding site" evidence="1">
    <location>
        <position position="174"/>
    </location>
    <ligand>
        <name>[4Fe-4S] cluster</name>
        <dbReference type="ChEBI" id="CHEBI:49883"/>
        <label>2</label>
        <note>4Fe-4S-S-AdoMet</note>
    </ligand>
</feature>
<feature type="binding site" evidence="1">
    <location>
        <position position="177"/>
    </location>
    <ligand>
        <name>[4Fe-4S] cluster</name>
        <dbReference type="ChEBI" id="CHEBI:49883"/>
        <label>2</label>
        <note>4Fe-4S-S-AdoMet</note>
    </ligand>
</feature>
<name>MIAB_PROM0</name>
<organism>
    <name type="scientific">Prochlorococcus marinus (strain MIT 9301)</name>
    <dbReference type="NCBI Taxonomy" id="167546"/>
    <lineage>
        <taxon>Bacteria</taxon>
        <taxon>Bacillati</taxon>
        <taxon>Cyanobacteriota</taxon>
        <taxon>Cyanophyceae</taxon>
        <taxon>Synechococcales</taxon>
        <taxon>Prochlorococcaceae</taxon>
        <taxon>Prochlorococcus</taxon>
    </lineage>
</organism>
<proteinExistence type="inferred from homology"/>
<gene>
    <name evidence="1" type="primary">miaB</name>
    <name type="ordered locus">P9301_14911</name>
</gene>
<keyword id="KW-0004">4Fe-4S</keyword>
<keyword id="KW-0963">Cytoplasm</keyword>
<keyword id="KW-0408">Iron</keyword>
<keyword id="KW-0411">Iron-sulfur</keyword>
<keyword id="KW-0479">Metal-binding</keyword>
<keyword id="KW-1185">Reference proteome</keyword>
<keyword id="KW-0949">S-adenosyl-L-methionine</keyword>
<keyword id="KW-0808">Transferase</keyword>
<keyword id="KW-0819">tRNA processing</keyword>
<comment type="function">
    <text evidence="1">Catalyzes the methylthiolation of N6-(dimethylallyl)adenosine (i(6)A), leading to the formation of 2-methylthio-N6-(dimethylallyl)adenosine (ms(2)i(6)A) at position 37 in tRNAs that read codons beginning with uridine.</text>
</comment>
<comment type="catalytic activity">
    <reaction evidence="1">
        <text>N(6)-dimethylallyladenosine(37) in tRNA + (sulfur carrier)-SH + AH2 + 2 S-adenosyl-L-methionine = 2-methylsulfanyl-N(6)-dimethylallyladenosine(37) in tRNA + (sulfur carrier)-H + 5'-deoxyadenosine + L-methionine + A + S-adenosyl-L-homocysteine + 2 H(+)</text>
        <dbReference type="Rhea" id="RHEA:37067"/>
        <dbReference type="Rhea" id="RHEA-COMP:10375"/>
        <dbReference type="Rhea" id="RHEA-COMP:10376"/>
        <dbReference type="Rhea" id="RHEA-COMP:14737"/>
        <dbReference type="Rhea" id="RHEA-COMP:14739"/>
        <dbReference type="ChEBI" id="CHEBI:13193"/>
        <dbReference type="ChEBI" id="CHEBI:15378"/>
        <dbReference type="ChEBI" id="CHEBI:17319"/>
        <dbReference type="ChEBI" id="CHEBI:17499"/>
        <dbReference type="ChEBI" id="CHEBI:29917"/>
        <dbReference type="ChEBI" id="CHEBI:57844"/>
        <dbReference type="ChEBI" id="CHEBI:57856"/>
        <dbReference type="ChEBI" id="CHEBI:59789"/>
        <dbReference type="ChEBI" id="CHEBI:64428"/>
        <dbReference type="ChEBI" id="CHEBI:74415"/>
        <dbReference type="ChEBI" id="CHEBI:74417"/>
        <dbReference type="EC" id="2.8.4.3"/>
    </reaction>
</comment>
<comment type="cofactor">
    <cofactor evidence="1">
        <name>[4Fe-4S] cluster</name>
        <dbReference type="ChEBI" id="CHEBI:49883"/>
    </cofactor>
    <text evidence="1">Binds 2 [4Fe-4S] clusters. One cluster is coordinated with 3 cysteines and an exchangeable S-adenosyl-L-methionine.</text>
</comment>
<comment type="subunit">
    <text evidence="1">Monomer.</text>
</comment>
<comment type="subcellular location">
    <subcellularLocation>
        <location evidence="1">Cytoplasm</location>
    </subcellularLocation>
</comment>
<comment type="similarity">
    <text evidence="1">Belongs to the methylthiotransferase family. MiaB subfamily.</text>
</comment>
<protein>
    <recommendedName>
        <fullName evidence="1">tRNA-2-methylthio-N(6)-dimethylallyladenosine synthase</fullName>
        <ecNumber evidence="1">2.8.4.3</ecNumber>
    </recommendedName>
    <alternativeName>
        <fullName evidence="1">(Dimethylallyl)adenosine tRNA methylthiotransferase MiaB</fullName>
    </alternativeName>
    <alternativeName>
        <fullName evidence="1">tRNA-i(6)A37 methylthiotransferase</fullName>
    </alternativeName>
</protein>
<reference key="1">
    <citation type="journal article" date="2007" name="PLoS Genet.">
        <title>Patterns and implications of gene gain and loss in the evolution of Prochlorococcus.</title>
        <authorList>
            <person name="Kettler G.C."/>
            <person name="Martiny A.C."/>
            <person name="Huang K."/>
            <person name="Zucker J."/>
            <person name="Coleman M.L."/>
            <person name="Rodrigue S."/>
            <person name="Chen F."/>
            <person name="Lapidus A."/>
            <person name="Ferriera S."/>
            <person name="Johnson J."/>
            <person name="Steglich C."/>
            <person name="Church G.M."/>
            <person name="Richardson P."/>
            <person name="Chisholm S.W."/>
        </authorList>
    </citation>
    <scope>NUCLEOTIDE SEQUENCE [LARGE SCALE GENOMIC DNA]</scope>
    <source>
        <strain>MIT 9301</strain>
    </source>
</reference>